<geneLocation type="plasmid">
    <name>pPT23D</name>
</geneLocation>
<keyword id="KW-0002">3D-structure</keyword>
<keyword id="KW-0186">Copper</keyword>
<keyword id="KW-0903">Direct protein sequencing</keyword>
<keyword id="KW-0479">Metal-binding</keyword>
<keyword id="KW-0574">Periplasm</keyword>
<keyword id="KW-0614">Plasmid</keyword>
<keyword id="KW-0732">Signal</keyword>
<proteinExistence type="evidence at protein level"/>
<gene>
    <name evidence="9 10" type="primary">copC</name>
</gene>
<comment type="function">
    <text evidence="1 4 5 6 7">Copper-binding protein involved in copper resistance and homeostasis (PubMed:12377120, PubMed:16022515, PubMed:16637653, PubMed:1924351, PubMed:3372485). Probably mediates copper resistance by sequestering the excess of copper in the periplasm (PubMed:1924351). May act as a copper carrier in the oxidizing periplasmic space that exchanges either Cu(I) or Cu(II) with its putative partners CopA, CopB and CopD (PubMed:16022515, PubMed:16637653).</text>
</comment>
<comment type="activity regulation">
    <text evidence="2">The redox state of copper bound to CopC may act as a switch between the possible trafficking pathways of the metal ion.</text>
</comment>
<comment type="subunit">
    <text evidence="1 2">Monomer.</text>
</comment>
<comment type="subcellular location">
    <subcellularLocation>
        <location evidence="6">Periplasm</location>
    </subcellularLocation>
</comment>
<comment type="induction">
    <text evidence="6">By copper.</text>
</comment>
<comment type="domain">
    <text evidence="2 4 5">Contains two copper binding sites, separated by 30 angstroms, which can be occupied either one at a time or simultaneously (PubMed:12651950, PubMed:16022515, PubMed:16637653). One is specific for Cu(I), while the other is specific for Cu(II) (PubMed:12651950, PubMed:16022515, PubMed:16637653). Oxidation of Cu(I) or reduction of Cu(II) causes migration of copper from one site to the other (PubMed:12651950). The availability of an unoccupied site of higher affinity induces intermolecular transfer of either Cu(I) or Cu(II) (PubMed:16022515, PubMed:16637653).</text>
</comment>
<comment type="disruption phenotype">
    <text evidence="7">Disruption of the gene reduces copper resistance to intermediate levels.</text>
</comment>
<comment type="similarity">
    <text evidence="11">Belongs to the CopC family.</text>
</comment>
<sequence length="126" mass="13042">MLLNRTSFVTLFAAGMLVSALAQAHPKLVSSTPAEGSEGAAPAKIELHFSENLVTQFSGAKLVMTAMPGMEHSPMAVKAAVSGGGDPKTMVITPASPLTAGTYKVDWRAVSSDTHPITGSVTFKVK</sequence>
<evidence type="ECO:0000269" key="1">
    <source>
    </source>
</evidence>
<evidence type="ECO:0000269" key="2">
    <source>
    </source>
</evidence>
<evidence type="ECO:0000269" key="3">
    <source>
    </source>
</evidence>
<evidence type="ECO:0000269" key="4">
    <source>
    </source>
</evidence>
<evidence type="ECO:0000269" key="5">
    <source>
    </source>
</evidence>
<evidence type="ECO:0000269" key="6">
    <source>
    </source>
</evidence>
<evidence type="ECO:0000269" key="7">
    <source>
    </source>
</evidence>
<evidence type="ECO:0000303" key="8">
    <source>
    </source>
</evidence>
<evidence type="ECO:0000303" key="9">
    <source>
    </source>
</evidence>
<evidence type="ECO:0000303" key="10">
    <source>
    </source>
</evidence>
<evidence type="ECO:0000305" key="11"/>
<evidence type="ECO:0000305" key="12">
    <source>
    </source>
</evidence>
<evidence type="ECO:0007744" key="13">
    <source>
        <dbReference type="PDB" id="1M42"/>
    </source>
</evidence>
<evidence type="ECO:0007744" key="14">
    <source>
        <dbReference type="PDB" id="1NM4"/>
    </source>
</evidence>
<evidence type="ECO:0007744" key="15">
    <source>
        <dbReference type="PDB" id="1OT4"/>
    </source>
</evidence>
<evidence type="ECO:0007744" key="16">
    <source>
        <dbReference type="PDB" id="2C9P"/>
    </source>
</evidence>
<evidence type="ECO:0007744" key="17">
    <source>
        <dbReference type="PDB" id="2C9Q"/>
    </source>
</evidence>
<evidence type="ECO:0007744" key="18">
    <source>
        <dbReference type="PDB" id="2C9R"/>
    </source>
</evidence>
<evidence type="ECO:0007829" key="19">
    <source>
        <dbReference type="PDB" id="2C9Q"/>
    </source>
</evidence>
<feature type="signal peptide" evidence="6">
    <location>
        <begin position="1"/>
        <end position="24"/>
    </location>
</feature>
<feature type="chain" id="PRO_0000006025" description="Copper resistance protein C">
    <location>
        <begin position="25"/>
        <end position="126"/>
    </location>
</feature>
<feature type="binding site" evidence="3 5 12 16 17">
    <location>
        <position position="25"/>
    </location>
    <ligand>
        <name>Cu(2+)</name>
        <dbReference type="ChEBI" id="CHEBI:29036"/>
    </ligand>
</feature>
<feature type="binding site" evidence="5 16 17">
    <location>
        <position position="64"/>
    </location>
    <ligand>
        <name>Cu(+)</name>
        <dbReference type="ChEBI" id="CHEBI:49552"/>
    </ligand>
</feature>
<feature type="binding site" evidence="5 16">
    <location>
        <position position="67"/>
    </location>
    <ligand>
        <name>Cu(+)</name>
        <dbReference type="ChEBI" id="CHEBI:49552"/>
    </ligand>
</feature>
<feature type="binding site" evidence="5 16">
    <location>
        <position position="70"/>
    </location>
    <ligand>
        <name>Cu(+)</name>
        <dbReference type="ChEBI" id="CHEBI:49552"/>
    </ligand>
</feature>
<feature type="binding site" evidence="5 17">
    <location>
        <position position="72"/>
    </location>
    <ligand>
        <name>Cu(+)</name>
        <dbReference type="ChEBI" id="CHEBI:49552"/>
    </ligand>
</feature>
<feature type="binding site" evidence="5 16">
    <location>
        <position position="75"/>
    </location>
    <ligand>
        <name>Cu(+)</name>
        <dbReference type="ChEBI" id="CHEBI:49552"/>
    </ligand>
</feature>
<feature type="binding site" evidence="3 5 12 16 17">
    <location>
        <position position="115"/>
    </location>
    <ligand>
        <name>Cu(2+)</name>
        <dbReference type="ChEBI" id="CHEBI:29036"/>
    </ligand>
</feature>
<feature type="mutagenesis site" description="Decreases affinity for copper(II)." evidence="5">
    <original>H</original>
    <variation>F</variation>
    <location>
        <position position="25"/>
    </location>
</feature>
<feature type="mutagenesis site" description="Increases affinity for copper(II)." evidence="5">
    <original>E</original>
    <variation>G</variation>
    <location>
        <position position="51"/>
    </location>
</feature>
<feature type="mutagenesis site" description="Decreases affinity for copper(II)." evidence="5">
    <original>H</original>
    <variation>F</variation>
    <location>
        <position position="115"/>
    </location>
</feature>
<feature type="strand" evidence="19">
    <location>
        <begin position="28"/>
        <end position="33"/>
    </location>
</feature>
<feature type="strand" evidence="19">
    <location>
        <begin position="38"/>
        <end position="40"/>
    </location>
</feature>
<feature type="strand" evidence="19">
    <location>
        <begin position="43"/>
        <end position="51"/>
    </location>
</feature>
<feature type="turn" evidence="19">
    <location>
        <begin position="55"/>
        <end position="57"/>
    </location>
</feature>
<feature type="strand" evidence="19">
    <location>
        <begin position="59"/>
        <end position="67"/>
    </location>
</feature>
<feature type="strand" evidence="19">
    <location>
        <begin position="70"/>
        <end position="77"/>
    </location>
</feature>
<feature type="strand" evidence="19">
    <location>
        <begin position="79"/>
        <end position="83"/>
    </location>
</feature>
<feature type="strand" evidence="19">
    <location>
        <begin position="89"/>
        <end position="96"/>
    </location>
</feature>
<feature type="strand" evidence="19">
    <location>
        <begin position="100"/>
        <end position="109"/>
    </location>
</feature>
<feature type="strand" evidence="19">
    <location>
        <begin position="117"/>
        <end position="125"/>
    </location>
</feature>
<dbReference type="EMBL" id="M19930">
    <property type="protein sequence ID" value="AAA25808.1"/>
    <property type="molecule type" value="Genomic_DNA"/>
</dbReference>
<dbReference type="PIR" id="C32018">
    <property type="entry name" value="C32018"/>
</dbReference>
<dbReference type="RefSeq" id="WP_003317555.1">
    <property type="nucleotide sequence ID" value="NZ_SNVE01000046.1"/>
</dbReference>
<dbReference type="PDB" id="1M42">
    <property type="method" value="NMR"/>
    <property type="chains" value="A=25-126"/>
</dbReference>
<dbReference type="PDB" id="1NM4">
    <property type="method" value="NMR"/>
    <property type="chains" value="A=25-126"/>
</dbReference>
<dbReference type="PDB" id="1OT4">
    <property type="method" value="NMR"/>
    <property type="chains" value="A=25-126"/>
</dbReference>
<dbReference type="PDB" id="2C9P">
    <property type="method" value="X-ray"/>
    <property type="resolution" value="2.25 A"/>
    <property type="chains" value="A/B/C=25-126"/>
</dbReference>
<dbReference type="PDB" id="2C9Q">
    <property type="method" value="X-ray"/>
    <property type="resolution" value="1.60 A"/>
    <property type="chains" value="A=25-126"/>
</dbReference>
<dbReference type="PDB" id="2C9R">
    <property type="method" value="X-ray"/>
    <property type="resolution" value="2.00 A"/>
    <property type="chains" value="A=25-126"/>
</dbReference>
<dbReference type="PDBsum" id="1M42"/>
<dbReference type="PDBsum" id="1NM4"/>
<dbReference type="PDBsum" id="1OT4"/>
<dbReference type="PDBsum" id="2C9P"/>
<dbReference type="PDBsum" id="2C9Q"/>
<dbReference type="PDBsum" id="2C9R"/>
<dbReference type="SMR" id="P12376"/>
<dbReference type="EvolutionaryTrace" id="P12376"/>
<dbReference type="GO" id="GO:0042597">
    <property type="term" value="C:periplasmic space"/>
    <property type="evidence" value="ECO:0007669"/>
    <property type="project" value="UniProtKB-SubCell"/>
</dbReference>
<dbReference type="GO" id="GO:0005886">
    <property type="term" value="C:plasma membrane"/>
    <property type="evidence" value="ECO:0007669"/>
    <property type="project" value="TreeGrafter"/>
</dbReference>
<dbReference type="GO" id="GO:0005507">
    <property type="term" value="F:copper ion binding"/>
    <property type="evidence" value="ECO:0007669"/>
    <property type="project" value="InterPro"/>
</dbReference>
<dbReference type="GO" id="GO:0006825">
    <property type="term" value="P:copper ion transport"/>
    <property type="evidence" value="ECO:0007669"/>
    <property type="project" value="InterPro"/>
</dbReference>
<dbReference type="GO" id="GO:0046688">
    <property type="term" value="P:response to copper ion"/>
    <property type="evidence" value="ECO:0007669"/>
    <property type="project" value="InterPro"/>
</dbReference>
<dbReference type="Gene3D" id="2.60.40.1220">
    <property type="match status" value="1"/>
</dbReference>
<dbReference type="InterPro" id="IPR047685">
    <property type="entry name" value="CopC-like"/>
</dbReference>
<dbReference type="InterPro" id="IPR032694">
    <property type="entry name" value="CopC/D"/>
</dbReference>
<dbReference type="InterPro" id="IPR007348">
    <property type="entry name" value="CopC_dom"/>
</dbReference>
<dbReference type="InterPro" id="IPR014755">
    <property type="entry name" value="Cu-Rt/internalin_Ig-like"/>
</dbReference>
<dbReference type="InterPro" id="IPR014756">
    <property type="entry name" value="Ig_E-set"/>
</dbReference>
<dbReference type="NCBIfam" id="NF033814">
    <property type="entry name" value="copper_CopC"/>
    <property type="match status" value="1"/>
</dbReference>
<dbReference type="PANTHER" id="PTHR34820">
    <property type="entry name" value="INNER MEMBRANE PROTEIN YEBZ"/>
    <property type="match status" value="1"/>
</dbReference>
<dbReference type="PANTHER" id="PTHR34820:SF4">
    <property type="entry name" value="INNER MEMBRANE PROTEIN YEBZ"/>
    <property type="match status" value="1"/>
</dbReference>
<dbReference type="Pfam" id="PF04234">
    <property type="entry name" value="CopC"/>
    <property type="match status" value="1"/>
</dbReference>
<dbReference type="SUPFAM" id="SSF81296">
    <property type="entry name" value="E set domains"/>
    <property type="match status" value="1"/>
</dbReference>
<protein>
    <recommendedName>
        <fullName evidence="11">Copper resistance protein C</fullName>
    </recommendedName>
    <alternativeName>
        <fullName evidence="8">Copper trafficking protein CopC</fullName>
    </alternativeName>
</protein>
<reference key="1">
    <citation type="journal article" date="1988" name="J. Bacteriol.">
        <title>Nucleotide sequence and organization of copper resistance genes from Pseudomonas syringae pv. tomato.</title>
        <authorList>
            <person name="Mellano M.A."/>
            <person name="Cooksey D.A."/>
        </authorList>
    </citation>
    <scope>NUCLEOTIDE SEQUENCE [GENOMIC DNA]</scope>
    <scope>FUNCTION</scope>
    <scope>DISRUPTION PHENOTYPE</scope>
</reference>
<reference key="2">
    <citation type="journal article" date="1991" name="Proc. Natl. Acad. Sci. U.S.A.">
        <title>Copper resistance in Pseudomonas syringae mediated by periplasmic and outer membrane proteins.</title>
        <authorList>
            <person name="Cha J.-S."/>
            <person name="Cooksey D.A."/>
        </authorList>
    </citation>
    <scope>PROTEIN SEQUENCE OF 25-29</scope>
    <scope>FUNCTION</scope>
    <scope>COPPER-BINDING</scope>
    <scope>SUBCELLULAR LOCATION</scope>
    <scope>INDUCTION</scope>
    <source>
        <strain>PT23.2</strain>
    </source>
</reference>
<reference key="3">
    <citation type="journal article" date="2005" name="Inorg. Chem.">
        <title>CopC protein from Pseudomonas syringae: intermolecular transfer of copper from both the copper(I) and copper(II) sites.</title>
        <authorList>
            <person name="Koay M."/>
            <person name="Zhang L."/>
            <person name="Yang B."/>
            <person name="Maher M.J."/>
            <person name="Xiao Z."/>
            <person name="Wedd A.G."/>
        </authorList>
    </citation>
    <scope>FUNCTION</scope>
    <scope>COPPER-BINDING</scope>
    <scope>DOMAIN</scope>
</reference>
<reference evidence="13" key="4">
    <citation type="journal article" date="2002" name="Structure">
        <title>Solution structure of CopC: a cupredoxin-like protein involved in copper homeostasis.</title>
        <authorList>
            <person name="Arnesano F."/>
            <person name="Banci L."/>
            <person name="Bertini I."/>
            <person name="Thompsett A.R."/>
        </authorList>
    </citation>
    <scope>STRUCTURE BY NMR OF 25-126</scope>
    <scope>FUNCTION</scope>
    <scope>COPPER-BINDING</scope>
    <scope>SUBUNIT</scope>
</reference>
<reference evidence="14" key="5">
    <citation type="journal article" date="2003" name="Proc. Natl. Acad. Sci. U.S.A.">
        <title>A redox switch in CopC: an intriguing copper trafficking protein that binds copper(I) and copper(II) at different sites.</title>
        <authorList>
            <person name="Arnesano F."/>
            <person name="Banci L."/>
            <person name="Bertini I."/>
            <person name="Mangani S."/>
            <person name="Thompsett A.R."/>
        </authorList>
    </citation>
    <scope>STRUCTURE BY NMR OF 25-126 IN COMPLEX WITH COPPER(I)</scope>
    <scope>ACTIVITY REGULATION</scope>
    <scope>SUBUNIT</scope>
    <scope>DOMAIN</scope>
</reference>
<reference evidence="15" key="6">
    <citation type="journal article" date="2003" name="J. Am. Chem. Soc.">
        <title>A strategy for the NMR characterization of type II copper(II) proteins: the case of the copper trafficking protein CopC from Pseudomonas Syringae.</title>
        <authorList>
            <person name="Arnesano F."/>
            <person name="Banci L."/>
            <person name="Bertini I."/>
            <person name="Felli I.C."/>
            <person name="Luchinat C."/>
            <person name="Thompsett A.R."/>
        </authorList>
    </citation>
    <scope>STRUCTURE BY NMR OF 25-126 IN COMPLEX WITH COPPER(II)</scope>
</reference>
<reference evidence="16 17 18" key="7">
    <citation type="journal article" date="2006" name="J. Am. Chem. Soc.">
        <title>Intermolecular transfer of copper ions from the CopC protein of Pseudomonas syringae. Crystal structures of fully loaded Cu(I)Cu(II) forms.</title>
        <authorList>
            <person name="Zhang L."/>
            <person name="Koay M."/>
            <person name="Maher M.J."/>
            <person name="Xiao Z."/>
            <person name="Wedd A.G."/>
        </authorList>
    </citation>
    <scope>X-RAY CRYSTALLOGRAPHY (1.60 ANGSTROMS) OF 25-126 IN COMPLEX WITH COPPER(I) AND COPPER(II) AND OF MUTANT PHE-115</scope>
    <scope>FUNCTION</scope>
    <scope>DOMAIN</scope>
    <scope>MUTAGENESIS OF HIS-25; GLU-51 AND HIS-115</scope>
</reference>
<name>COPC_PSEUB</name>
<organism>
    <name type="scientific">Pseudomonas syringae pv. tomato</name>
    <dbReference type="NCBI Taxonomy" id="323"/>
    <lineage>
        <taxon>Bacteria</taxon>
        <taxon>Pseudomonadati</taxon>
        <taxon>Pseudomonadota</taxon>
        <taxon>Gammaproteobacteria</taxon>
        <taxon>Pseudomonadales</taxon>
        <taxon>Pseudomonadaceae</taxon>
        <taxon>Pseudomonas</taxon>
    </lineage>
</organism>
<accession>P12376</accession>